<name>CITG_ALBFT</name>
<dbReference type="EC" id="2.4.2.52" evidence="1"/>
<dbReference type="EMBL" id="CP000267">
    <property type="protein sequence ID" value="ABD70122.1"/>
    <property type="molecule type" value="Genomic_DNA"/>
</dbReference>
<dbReference type="RefSeq" id="WP_011464690.1">
    <property type="nucleotide sequence ID" value="NC_007908.1"/>
</dbReference>
<dbReference type="STRING" id="338969.Rfer_2405"/>
<dbReference type="KEGG" id="rfr:Rfer_2405"/>
<dbReference type="eggNOG" id="COG1767">
    <property type="taxonomic scope" value="Bacteria"/>
</dbReference>
<dbReference type="HOGENOM" id="CLU_056179_1_0_4"/>
<dbReference type="OrthoDB" id="114886at2"/>
<dbReference type="Proteomes" id="UP000008332">
    <property type="component" value="Chromosome"/>
</dbReference>
<dbReference type="GO" id="GO:0005524">
    <property type="term" value="F:ATP binding"/>
    <property type="evidence" value="ECO:0007669"/>
    <property type="project" value="UniProtKB-KW"/>
</dbReference>
<dbReference type="GO" id="GO:0046917">
    <property type="term" value="F:triphosphoribosyl-dephospho-CoA synthase activity"/>
    <property type="evidence" value="ECO:0007669"/>
    <property type="project" value="UniProtKB-UniRule"/>
</dbReference>
<dbReference type="GO" id="GO:0051191">
    <property type="term" value="P:prosthetic group biosynthetic process"/>
    <property type="evidence" value="ECO:0007669"/>
    <property type="project" value="TreeGrafter"/>
</dbReference>
<dbReference type="Gene3D" id="1.10.4200.10">
    <property type="entry name" value="Triphosphoribosyl-dephospho-CoA protein"/>
    <property type="match status" value="2"/>
</dbReference>
<dbReference type="HAMAP" id="MF_00397">
    <property type="entry name" value="CitG"/>
    <property type="match status" value="1"/>
</dbReference>
<dbReference type="InterPro" id="IPR002736">
    <property type="entry name" value="CitG"/>
</dbReference>
<dbReference type="InterPro" id="IPR017551">
    <property type="entry name" value="TriPribosyl-deP-CoA_syn_CitG"/>
</dbReference>
<dbReference type="NCBIfam" id="TIGR03125">
    <property type="entry name" value="citrate_citG"/>
    <property type="match status" value="1"/>
</dbReference>
<dbReference type="PANTHER" id="PTHR30201:SF2">
    <property type="entry name" value="2-(5''-TRIPHOSPHORIBOSYL)-3'-DEPHOSPHOCOENZYME-A SYNTHASE"/>
    <property type="match status" value="1"/>
</dbReference>
<dbReference type="PANTHER" id="PTHR30201">
    <property type="entry name" value="TRIPHOSPHORIBOSYL-DEPHOSPHO-COA SYNTHASE"/>
    <property type="match status" value="1"/>
</dbReference>
<dbReference type="Pfam" id="PF01874">
    <property type="entry name" value="CitG"/>
    <property type="match status" value="1"/>
</dbReference>
<gene>
    <name evidence="1" type="primary">citG</name>
    <name type="ordered locus">Rfer_2405</name>
</gene>
<proteinExistence type="inferred from homology"/>
<keyword id="KW-0067">ATP-binding</keyword>
<keyword id="KW-0547">Nucleotide-binding</keyword>
<keyword id="KW-1185">Reference proteome</keyword>
<keyword id="KW-0808">Transferase</keyword>
<protein>
    <recommendedName>
        <fullName evidence="1">Probable 2-(5''-triphosphoribosyl)-3'-dephosphocoenzyme-A synthase</fullName>
        <shortName evidence="1">2-(5''-triphosphoribosyl)-3'-dephospho-CoA synthase</shortName>
        <ecNumber evidence="1">2.4.2.52</ecNumber>
    </recommendedName>
</protein>
<comment type="catalytic activity">
    <reaction evidence="1">
        <text>3'-dephospho-CoA + ATP = 2'-(5''-triphospho-alpha-D-ribosyl)-3'-dephospho-CoA + adenine</text>
        <dbReference type="Rhea" id="RHEA:15117"/>
        <dbReference type="ChEBI" id="CHEBI:16708"/>
        <dbReference type="ChEBI" id="CHEBI:30616"/>
        <dbReference type="ChEBI" id="CHEBI:57328"/>
        <dbReference type="ChEBI" id="CHEBI:61378"/>
        <dbReference type="EC" id="2.4.2.52"/>
    </reaction>
</comment>
<comment type="similarity">
    <text evidence="1">Belongs to the CitG/MdcB family.</text>
</comment>
<sequence>MPTATALRIDAGSGASDLGEAIGRLAERSLVLELELTPKPGLVDRANSGAHRDMDVGTFRASIAAISPWFSFFFERGVDGSAVPVEDFLRYIRADGMACERAMFAATLGVNTHKGSVFSFGLLCAAAGRLHGRGRPLSRASVCAEVSHICAGLVKRELLLPAAARTAGELLYWQHGLTGARGEAQSGFATACAHGVVPYLLARAKGMDEERSLFEALLQLMAHNRDTNIVSRGGMEGLCLVQAEARRLLDCPTPSRSARTAQLAAFDQLLIERNLSPGGSADLLAVSWFLANLDELVCKCVA</sequence>
<reference key="1">
    <citation type="submission" date="2006-02" db="EMBL/GenBank/DDBJ databases">
        <title>Complete sequence of chromosome of Rhodoferax ferrireducens DSM 15236.</title>
        <authorList>
            <person name="Copeland A."/>
            <person name="Lucas S."/>
            <person name="Lapidus A."/>
            <person name="Barry K."/>
            <person name="Detter J.C."/>
            <person name="Glavina del Rio T."/>
            <person name="Hammon N."/>
            <person name="Israni S."/>
            <person name="Pitluck S."/>
            <person name="Brettin T."/>
            <person name="Bruce D."/>
            <person name="Han C."/>
            <person name="Tapia R."/>
            <person name="Gilna P."/>
            <person name="Kiss H."/>
            <person name="Schmutz J."/>
            <person name="Larimer F."/>
            <person name="Land M."/>
            <person name="Kyrpides N."/>
            <person name="Ivanova N."/>
            <person name="Richardson P."/>
        </authorList>
    </citation>
    <scope>NUCLEOTIDE SEQUENCE [LARGE SCALE GENOMIC DNA]</scope>
    <source>
        <strain>ATCC BAA-621 / DSM 15236 / T118</strain>
    </source>
</reference>
<feature type="chain" id="PRO_0000255406" description="Probable 2-(5''-triphosphoribosyl)-3'-dephosphocoenzyme-A synthase">
    <location>
        <begin position="1"/>
        <end position="302"/>
    </location>
</feature>
<evidence type="ECO:0000255" key="1">
    <source>
        <dbReference type="HAMAP-Rule" id="MF_00397"/>
    </source>
</evidence>
<organism>
    <name type="scientific">Albidiferax ferrireducens (strain ATCC BAA-621 / DSM 15236 / T118)</name>
    <name type="common">Rhodoferax ferrireducens</name>
    <dbReference type="NCBI Taxonomy" id="338969"/>
    <lineage>
        <taxon>Bacteria</taxon>
        <taxon>Pseudomonadati</taxon>
        <taxon>Pseudomonadota</taxon>
        <taxon>Betaproteobacteria</taxon>
        <taxon>Burkholderiales</taxon>
        <taxon>Comamonadaceae</taxon>
        <taxon>Rhodoferax</taxon>
    </lineage>
</organism>
<accession>Q21VT1</accession>